<sequence length="438" mass="49166">MPRKFLGEKIDRNTDFLRPSSLTLTADDLKVIPDFKCDDDDAVLSGNKTGKRLSRKFGGTMRLKQRLESVPELFLHDFRKRRGQKLQERNNDEQISRAKLPPHLSGLRRPNGLPARKPLRTITEVLPPVTSYNNSIEQNEDDLYYVEKKDPKEHVVETNHKEMRPLDKPLIEKVENVYLEPLIFPVQVSEPVNQMSIPMEELQKYGKSDSEILFDEIISAYEPHMETTGDVSNVLNSEILSVLDRVSNAPKKNWNLMAPKVISAEAIEENKRLSINSIASSGRTPESTRNSRFCENLSSPEYSTAASVSDRWSSGDEFSDVASSNPNSHAISHDGSYTTALGSIPSLAGSVDNLDILDQKDILSPTVSNEIITVKPVPQNTVETMHVTKIVIKPQLFLDWESEEEDDPIDALSRQVDNIEIASVYSGSSSVYSDHFAT</sequence>
<evidence type="ECO:0000250" key="1"/>
<organism>
    <name type="scientific">Candida glabrata (strain ATCC 2001 / BCRC 20586 / JCM 3761 / NBRC 0622 / NRRL Y-65 / CBS 138)</name>
    <name type="common">Yeast</name>
    <name type="synonym">Nakaseomyces glabratus</name>
    <dbReference type="NCBI Taxonomy" id="284593"/>
    <lineage>
        <taxon>Eukaryota</taxon>
        <taxon>Fungi</taxon>
        <taxon>Dikarya</taxon>
        <taxon>Ascomycota</taxon>
        <taxon>Saccharomycotina</taxon>
        <taxon>Saccharomycetes</taxon>
        <taxon>Saccharomycetales</taxon>
        <taxon>Saccharomycetaceae</taxon>
        <taxon>Nakaseomyces</taxon>
    </lineage>
</organism>
<protein>
    <recommendedName>
        <fullName>Protein DSE3</fullName>
    </recommendedName>
</protein>
<name>DSE3_CANGA</name>
<feature type="chain" id="PRO_0000233006" description="Protein DSE3">
    <location>
        <begin position="1"/>
        <end position="438"/>
    </location>
</feature>
<keyword id="KW-0131">Cell cycle</keyword>
<keyword id="KW-1185">Reference proteome</keyword>
<accession>Q6FWU4</accession>
<gene>
    <name type="primary">DSE3</name>
    <name type="ordered locus">CAGL0C02827g</name>
</gene>
<proteinExistence type="inferred from homology"/>
<dbReference type="EMBL" id="CR380949">
    <property type="protein sequence ID" value="CAG58206.1"/>
    <property type="molecule type" value="Genomic_DNA"/>
</dbReference>
<dbReference type="RefSeq" id="XP_445300.1">
    <property type="nucleotide sequence ID" value="XM_445300.1"/>
</dbReference>
<dbReference type="FunCoup" id="Q6FWU4">
    <property type="interactions" value="50"/>
</dbReference>
<dbReference type="STRING" id="284593.Q6FWU4"/>
<dbReference type="EnsemblFungi" id="CAGL0C02827g-T">
    <property type="protein sequence ID" value="CAGL0C02827g-T-p1"/>
    <property type="gene ID" value="CAGL0C02827g"/>
</dbReference>
<dbReference type="KEGG" id="cgr:2886934"/>
<dbReference type="CGD" id="CAL0127448">
    <property type="gene designation" value="CAGL0C02827g"/>
</dbReference>
<dbReference type="VEuPathDB" id="FungiDB:CAGL0C02827g"/>
<dbReference type="eggNOG" id="ENOG502S2PC">
    <property type="taxonomic scope" value="Eukaryota"/>
</dbReference>
<dbReference type="HOGENOM" id="CLU_052222_0_0_1"/>
<dbReference type="InParanoid" id="Q6FWU4"/>
<dbReference type="OMA" id="ICASKQI"/>
<dbReference type="Proteomes" id="UP000002428">
    <property type="component" value="Chromosome C"/>
</dbReference>
<dbReference type="GO" id="GO:0005935">
    <property type="term" value="C:cellular bud neck"/>
    <property type="evidence" value="ECO:0007669"/>
    <property type="project" value="UniProtKB-SubCell"/>
</dbReference>
<reference key="1">
    <citation type="journal article" date="2004" name="Nature">
        <title>Genome evolution in yeasts.</title>
        <authorList>
            <person name="Dujon B."/>
            <person name="Sherman D."/>
            <person name="Fischer G."/>
            <person name="Durrens P."/>
            <person name="Casaregola S."/>
            <person name="Lafontaine I."/>
            <person name="de Montigny J."/>
            <person name="Marck C."/>
            <person name="Neuveglise C."/>
            <person name="Talla E."/>
            <person name="Goffard N."/>
            <person name="Frangeul L."/>
            <person name="Aigle M."/>
            <person name="Anthouard V."/>
            <person name="Babour A."/>
            <person name="Barbe V."/>
            <person name="Barnay S."/>
            <person name="Blanchin S."/>
            <person name="Beckerich J.-M."/>
            <person name="Beyne E."/>
            <person name="Bleykasten C."/>
            <person name="Boisrame A."/>
            <person name="Boyer J."/>
            <person name="Cattolico L."/>
            <person name="Confanioleri F."/>
            <person name="de Daruvar A."/>
            <person name="Despons L."/>
            <person name="Fabre E."/>
            <person name="Fairhead C."/>
            <person name="Ferry-Dumazet H."/>
            <person name="Groppi A."/>
            <person name="Hantraye F."/>
            <person name="Hennequin C."/>
            <person name="Jauniaux N."/>
            <person name="Joyet P."/>
            <person name="Kachouri R."/>
            <person name="Kerrest A."/>
            <person name="Koszul R."/>
            <person name="Lemaire M."/>
            <person name="Lesur I."/>
            <person name="Ma L."/>
            <person name="Muller H."/>
            <person name="Nicaud J.-M."/>
            <person name="Nikolski M."/>
            <person name="Oztas S."/>
            <person name="Ozier-Kalogeropoulos O."/>
            <person name="Pellenz S."/>
            <person name="Potier S."/>
            <person name="Richard G.-F."/>
            <person name="Straub M.-L."/>
            <person name="Suleau A."/>
            <person name="Swennen D."/>
            <person name="Tekaia F."/>
            <person name="Wesolowski-Louvel M."/>
            <person name="Westhof E."/>
            <person name="Wirth B."/>
            <person name="Zeniou-Meyer M."/>
            <person name="Zivanovic Y."/>
            <person name="Bolotin-Fukuhara M."/>
            <person name="Thierry A."/>
            <person name="Bouchier C."/>
            <person name="Caudron B."/>
            <person name="Scarpelli C."/>
            <person name="Gaillardin C."/>
            <person name="Weissenbach J."/>
            <person name="Wincker P."/>
            <person name="Souciet J.-L."/>
        </authorList>
    </citation>
    <scope>NUCLEOTIDE SEQUENCE [LARGE SCALE GENOMIC DNA]</scope>
    <source>
        <strain>ATCC 2001 / BCRC 20586 / JCM 3761 / NBRC 0622 / NRRL Y-65 / CBS 138</strain>
    </source>
</reference>
<comment type="function">
    <text evidence="1">May be involved in the establishment of the daughter fate.</text>
</comment>
<comment type="subcellular location">
    <subcellularLocation>
        <location evidence="1">Bud neck</location>
    </subcellularLocation>
</comment>